<evidence type="ECO:0000255" key="1">
    <source>
        <dbReference type="HAMAP-Rule" id="MF_03005"/>
    </source>
</evidence>
<evidence type="ECO:0000255" key="2">
    <source>
        <dbReference type="PROSITE-ProRule" id="PRU01182"/>
    </source>
</evidence>
<name>EIF3F_CULQU</name>
<proteinExistence type="inferred from homology"/>
<sequence length="287" mass="31667">MSTINLPLNLTVRVHPVVLFQIVDAYERRNADSERVIGTLLGSVEKGIVEVTNCFCVPHKEHADQVEAELGYASDLYDLNRRVNPSENIVGWWATGQEVTNHSSVIHEYYARECNNPIHLTLDTSLTAARMGIKAYVCVSLGVPGGKTGCMFTPINVEVTSYEPEVVGLSLCAKTIGVQSNPARPRTVSPMLDLAQVSEASGKLQTLLGEVLNYVEDVLAEKQQPDNFVGRALLDLIHSVPNMKHEEFAKMFNSNVKDLLMVVTLSQLIKTQLQLNEKLTSLTSFLS</sequence>
<organism>
    <name type="scientific">Culex quinquefasciatus</name>
    <name type="common">Southern house mosquito</name>
    <name type="synonym">Culex pungens</name>
    <dbReference type="NCBI Taxonomy" id="7176"/>
    <lineage>
        <taxon>Eukaryota</taxon>
        <taxon>Metazoa</taxon>
        <taxon>Ecdysozoa</taxon>
        <taxon>Arthropoda</taxon>
        <taxon>Hexapoda</taxon>
        <taxon>Insecta</taxon>
        <taxon>Pterygota</taxon>
        <taxon>Neoptera</taxon>
        <taxon>Endopterygota</taxon>
        <taxon>Diptera</taxon>
        <taxon>Nematocera</taxon>
        <taxon>Culicoidea</taxon>
        <taxon>Culicidae</taxon>
        <taxon>Culicinae</taxon>
        <taxon>Culicini</taxon>
        <taxon>Culex</taxon>
        <taxon>Culex</taxon>
    </lineage>
</organism>
<protein>
    <recommendedName>
        <fullName evidence="1">Eukaryotic translation initiation factor 3 subunit F</fullName>
        <shortName evidence="1">eIF3f</shortName>
    </recommendedName>
    <alternativeName>
        <fullName evidence="1">Eukaryotic translation initiation factor 3 subunit 5</fullName>
    </alternativeName>
</protein>
<keyword id="KW-0963">Cytoplasm</keyword>
<keyword id="KW-0396">Initiation factor</keyword>
<keyword id="KW-0648">Protein biosynthesis</keyword>
<keyword id="KW-1185">Reference proteome</keyword>
<comment type="function">
    <text evidence="1">Component of the eukaryotic translation initiation factor 3 (eIF-3) complex, which is involved in protein synthesis of a specialized repertoire of mRNAs and, together with other initiation factors, stimulates binding of mRNA and methionyl-tRNAi to the 40S ribosome. The eIF-3 complex specifically targets and initiates translation of a subset of mRNAs involved in cell proliferation.</text>
</comment>
<comment type="subunit">
    <text evidence="1">Component of the eukaryotic translation initiation factor 3 (eIF-3) complex.</text>
</comment>
<comment type="subcellular location">
    <subcellularLocation>
        <location evidence="1">Cytoplasm</location>
    </subcellularLocation>
</comment>
<comment type="similarity">
    <text evidence="1">Belongs to the eIF-3 subunit F family.</text>
</comment>
<accession>B0X2G0</accession>
<feature type="chain" id="PRO_0000364296" description="Eukaryotic translation initiation factor 3 subunit F">
    <location>
        <begin position="1"/>
        <end position="287"/>
    </location>
</feature>
<feature type="domain" description="MPN" evidence="2">
    <location>
        <begin position="12"/>
        <end position="142"/>
    </location>
</feature>
<gene>
    <name evidence="1" type="primary">eIF3-S5</name>
    <name type="ORF">CPIJ012970</name>
</gene>
<dbReference type="EMBL" id="DS232288">
    <property type="protein sequence ID" value="EDS39183.1"/>
    <property type="molecule type" value="Genomic_DNA"/>
</dbReference>
<dbReference type="SMR" id="B0X2G0"/>
<dbReference type="FunCoup" id="B0X2G0">
    <property type="interactions" value="2211"/>
</dbReference>
<dbReference type="STRING" id="7176.B0X2G0"/>
<dbReference type="EnsemblMetazoa" id="CPIJ012970-RA">
    <property type="protein sequence ID" value="CPIJ012970-PA"/>
    <property type="gene ID" value="CPIJ012970"/>
</dbReference>
<dbReference type="EnsemblMetazoa" id="CQUJHB010635.R16365">
    <property type="protein sequence ID" value="CQUJHB010635.P16365"/>
    <property type="gene ID" value="CQUJHB010635"/>
</dbReference>
<dbReference type="EnsemblMetazoa" id="XM_001863797.2">
    <property type="protein sequence ID" value="XP_001863832.1"/>
    <property type="gene ID" value="LOC6046664"/>
</dbReference>
<dbReference type="GeneID" id="6046664"/>
<dbReference type="KEGG" id="cqu:CpipJ_CPIJ012970"/>
<dbReference type="CTD" id="40587"/>
<dbReference type="VEuPathDB" id="VectorBase:CPIJ012970"/>
<dbReference type="VEuPathDB" id="VectorBase:CQUJHB010635"/>
<dbReference type="eggNOG" id="KOG2975">
    <property type="taxonomic scope" value="Eukaryota"/>
</dbReference>
<dbReference type="HOGENOM" id="CLU_027018_0_1_1"/>
<dbReference type="InParanoid" id="B0X2G0"/>
<dbReference type="OMA" id="EYFVHFH"/>
<dbReference type="OrthoDB" id="25498at2759"/>
<dbReference type="PhylomeDB" id="B0X2G0"/>
<dbReference type="Proteomes" id="UP000002320">
    <property type="component" value="Unassembled WGS sequence"/>
</dbReference>
<dbReference type="GO" id="GO:0016282">
    <property type="term" value="C:eukaryotic 43S preinitiation complex"/>
    <property type="evidence" value="ECO:0007669"/>
    <property type="project" value="UniProtKB-UniRule"/>
</dbReference>
<dbReference type="GO" id="GO:0033290">
    <property type="term" value="C:eukaryotic 48S preinitiation complex"/>
    <property type="evidence" value="ECO:0007669"/>
    <property type="project" value="UniProtKB-UniRule"/>
</dbReference>
<dbReference type="GO" id="GO:0071541">
    <property type="term" value="C:eukaryotic translation initiation factor 3 complex, eIF3m"/>
    <property type="evidence" value="ECO:0007669"/>
    <property type="project" value="TreeGrafter"/>
</dbReference>
<dbReference type="GO" id="GO:0008237">
    <property type="term" value="F:metallopeptidase activity"/>
    <property type="evidence" value="ECO:0007669"/>
    <property type="project" value="InterPro"/>
</dbReference>
<dbReference type="GO" id="GO:0003743">
    <property type="term" value="F:translation initiation factor activity"/>
    <property type="evidence" value="ECO:0007669"/>
    <property type="project" value="UniProtKB-UniRule"/>
</dbReference>
<dbReference type="GO" id="GO:0031369">
    <property type="term" value="F:translation initiation factor binding"/>
    <property type="evidence" value="ECO:0007669"/>
    <property type="project" value="InterPro"/>
</dbReference>
<dbReference type="GO" id="GO:0001732">
    <property type="term" value="P:formation of cytoplasmic translation initiation complex"/>
    <property type="evidence" value="ECO:0007669"/>
    <property type="project" value="UniProtKB-UniRule"/>
</dbReference>
<dbReference type="CDD" id="cd08064">
    <property type="entry name" value="MPN_eIF3f"/>
    <property type="match status" value="1"/>
</dbReference>
<dbReference type="FunFam" id="3.40.140.10:FF:000014">
    <property type="entry name" value="Eukaryotic translation initiation factor 3 subunit F"/>
    <property type="match status" value="1"/>
</dbReference>
<dbReference type="Gene3D" id="3.40.140.10">
    <property type="entry name" value="Cytidine Deaminase, domain 2"/>
    <property type="match status" value="1"/>
</dbReference>
<dbReference type="HAMAP" id="MF_03005">
    <property type="entry name" value="eIF3f"/>
    <property type="match status" value="1"/>
</dbReference>
<dbReference type="InterPro" id="IPR027531">
    <property type="entry name" value="eIF3f"/>
</dbReference>
<dbReference type="InterPro" id="IPR024969">
    <property type="entry name" value="EIF3F/CSN6-like_C"/>
</dbReference>
<dbReference type="InterPro" id="IPR000555">
    <property type="entry name" value="JAMM/MPN+_dom"/>
</dbReference>
<dbReference type="InterPro" id="IPR037518">
    <property type="entry name" value="MPN"/>
</dbReference>
<dbReference type="PANTHER" id="PTHR10540:SF6">
    <property type="entry name" value="EUKARYOTIC TRANSLATION INITIATION FACTOR 3 SUBUNIT F"/>
    <property type="match status" value="1"/>
</dbReference>
<dbReference type="PANTHER" id="PTHR10540">
    <property type="entry name" value="EUKARYOTIC TRANSLATION INITIATION FACTOR 3 SUBUNIT F-RELATED"/>
    <property type="match status" value="1"/>
</dbReference>
<dbReference type="Pfam" id="PF01398">
    <property type="entry name" value="JAB"/>
    <property type="match status" value="1"/>
</dbReference>
<dbReference type="Pfam" id="PF13012">
    <property type="entry name" value="MitMem_reg"/>
    <property type="match status" value="1"/>
</dbReference>
<dbReference type="SMART" id="SM00232">
    <property type="entry name" value="JAB_MPN"/>
    <property type="match status" value="1"/>
</dbReference>
<dbReference type="PROSITE" id="PS50249">
    <property type="entry name" value="MPN"/>
    <property type="match status" value="1"/>
</dbReference>
<reference key="1">
    <citation type="submission" date="2007-03" db="EMBL/GenBank/DDBJ databases">
        <title>Annotation of Culex pipiens quinquefasciatus.</title>
        <authorList>
            <consortium name="The Broad Institute Genome Sequencing Platform"/>
            <person name="Atkinson P.W."/>
            <person name="Hemingway J."/>
            <person name="Christensen B.M."/>
            <person name="Higgs S."/>
            <person name="Kodira C.D."/>
            <person name="Hannick L.I."/>
            <person name="Megy K."/>
            <person name="O'Leary S.B."/>
            <person name="Pearson M."/>
            <person name="Haas B.J."/>
            <person name="Mauceli E."/>
            <person name="Wortman J.R."/>
            <person name="Lee N.H."/>
            <person name="Guigo R."/>
            <person name="Stanke M."/>
            <person name="Alvarado L."/>
            <person name="Amedeo P."/>
            <person name="Antoine C.H."/>
            <person name="Arensburger P."/>
            <person name="Bidwell S.L."/>
            <person name="Crawford M."/>
            <person name="Camaro F."/>
            <person name="Devon K."/>
            <person name="Engels R."/>
            <person name="Hammond M."/>
            <person name="Howarth C."/>
            <person name="Koehrsen M."/>
            <person name="Lawson D."/>
            <person name="Montgomery P."/>
            <person name="Nene V."/>
            <person name="Nusbaum C."/>
            <person name="Puiu D."/>
            <person name="Romero-Severson J."/>
            <person name="Severson D.W."/>
            <person name="Shumway M."/>
            <person name="Sisk P."/>
            <person name="Stolte C."/>
            <person name="Zeng Q."/>
            <person name="Eisenstadt E."/>
            <person name="Fraser-Liggett C.M."/>
            <person name="Strausberg R."/>
            <person name="Galagan J."/>
            <person name="Birren B."/>
            <person name="Collins F.H."/>
        </authorList>
    </citation>
    <scope>NUCLEOTIDE SEQUENCE [LARGE SCALE GENOMIC DNA]</scope>
    <source>
        <strain>JHB</strain>
    </source>
</reference>